<organism>
    <name type="scientific">Shewanella putrefaciens (strain CN-32 / ATCC BAA-453)</name>
    <dbReference type="NCBI Taxonomy" id="319224"/>
    <lineage>
        <taxon>Bacteria</taxon>
        <taxon>Pseudomonadati</taxon>
        <taxon>Pseudomonadota</taxon>
        <taxon>Gammaproteobacteria</taxon>
        <taxon>Alteromonadales</taxon>
        <taxon>Shewanellaceae</taxon>
        <taxon>Shewanella</taxon>
    </lineage>
</organism>
<reference key="1">
    <citation type="submission" date="2007-04" db="EMBL/GenBank/DDBJ databases">
        <title>Complete sequence of Shewanella putrefaciens CN-32.</title>
        <authorList>
            <consortium name="US DOE Joint Genome Institute"/>
            <person name="Copeland A."/>
            <person name="Lucas S."/>
            <person name="Lapidus A."/>
            <person name="Barry K."/>
            <person name="Detter J.C."/>
            <person name="Glavina del Rio T."/>
            <person name="Hammon N."/>
            <person name="Israni S."/>
            <person name="Dalin E."/>
            <person name="Tice H."/>
            <person name="Pitluck S."/>
            <person name="Chain P."/>
            <person name="Malfatti S."/>
            <person name="Shin M."/>
            <person name="Vergez L."/>
            <person name="Schmutz J."/>
            <person name="Larimer F."/>
            <person name="Land M."/>
            <person name="Hauser L."/>
            <person name="Kyrpides N."/>
            <person name="Mikhailova N."/>
            <person name="Romine M.F."/>
            <person name="Fredrickson J."/>
            <person name="Tiedje J."/>
            <person name="Richardson P."/>
        </authorList>
    </citation>
    <scope>NUCLEOTIDE SEQUENCE [LARGE SCALE GENOMIC DNA]</scope>
    <source>
        <strain>CN-32 / ATCC BAA-453</strain>
    </source>
</reference>
<protein>
    <recommendedName>
        <fullName evidence="1">Large ribosomal subunit protein bL27</fullName>
    </recommendedName>
    <alternativeName>
        <fullName evidence="3">50S ribosomal protein L27</fullName>
    </alternativeName>
</protein>
<feature type="chain" id="PRO_1000017602" description="Large ribosomal subunit protein bL27">
    <location>
        <begin position="1"/>
        <end position="84"/>
    </location>
</feature>
<feature type="region of interest" description="Disordered" evidence="2">
    <location>
        <begin position="1"/>
        <end position="22"/>
    </location>
</feature>
<dbReference type="EMBL" id="CP000681">
    <property type="protein sequence ID" value="ABP74709.1"/>
    <property type="molecule type" value="Genomic_DNA"/>
</dbReference>
<dbReference type="SMR" id="A4Y426"/>
<dbReference type="STRING" id="319224.Sputcn32_0980"/>
<dbReference type="KEGG" id="spc:Sputcn32_0980"/>
<dbReference type="eggNOG" id="COG0211">
    <property type="taxonomic scope" value="Bacteria"/>
</dbReference>
<dbReference type="HOGENOM" id="CLU_095424_4_1_6"/>
<dbReference type="GO" id="GO:0022625">
    <property type="term" value="C:cytosolic large ribosomal subunit"/>
    <property type="evidence" value="ECO:0007669"/>
    <property type="project" value="TreeGrafter"/>
</dbReference>
<dbReference type="GO" id="GO:0003735">
    <property type="term" value="F:structural constituent of ribosome"/>
    <property type="evidence" value="ECO:0007669"/>
    <property type="project" value="InterPro"/>
</dbReference>
<dbReference type="GO" id="GO:0006412">
    <property type="term" value="P:translation"/>
    <property type="evidence" value="ECO:0007669"/>
    <property type="project" value="UniProtKB-UniRule"/>
</dbReference>
<dbReference type="FunFam" id="2.40.50.100:FF:000001">
    <property type="entry name" value="50S ribosomal protein L27"/>
    <property type="match status" value="1"/>
</dbReference>
<dbReference type="Gene3D" id="2.40.50.100">
    <property type="match status" value="1"/>
</dbReference>
<dbReference type="HAMAP" id="MF_00539">
    <property type="entry name" value="Ribosomal_bL27"/>
    <property type="match status" value="1"/>
</dbReference>
<dbReference type="InterPro" id="IPR001684">
    <property type="entry name" value="Ribosomal_bL27"/>
</dbReference>
<dbReference type="InterPro" id="IPR018261">
    <property type="entry name" value="Ribosomal_bL27_CS"/>
</dbReference>
<dbReference type="NCBIfam" id="TIGR00062">
    <property type="entry name" value="L27"/>
    <property type="match status" value="1"/>
</dbReference>
<dbReference type="PANTHER" id="PTHR15893:SF0">
    <property type="entry name" value="LARGE RIBOSOMAL SUBUNIT PROTEIN BL27M"/>
    <property type="match status" value="1"/>
</dbReference>
<dbReference type="PANTHER" id="PTHR15893">
    <property type="entry name" value="RIBOSOMAL PROTEIN L27"/>
    <property type="match status" value="1"/>
</dbReference>
<dbReference type="Pfam" id="PF01016">
    <property type="entry name" value="Ribosomal_L27"/>
    <property type="match status" value="1"/>
</dbReference>
<dbReference type="PRINTS" id="PR00063">
    <property type="entry name" value="RIBOSOMALL27"/>
</dbReference>
<dbReference type="SUPFAM" id="SSF110324">
    <property type="entry name" value="Ribosomal L27 protein-like"/>
    <property type="match status" value="1"/>
</dbReference>
<dbReference type="PROSITE" id="PS00831">
    <property type="entry name" value="RIBOSOMAL_L27"/>
    <property type="match status" value="1"/>
</dbReference>
<sequence>MAHKKAGGSTRNGRDSESKRLGVKRFGGESVLAGNIIVRQRGTKFHAGVNVGIGRDHTLFALTDGKVKFEVKGPNNRKFISIEA</sequence>
<keyword id="KW-0687">Ribonucleoprotein</keyword>
<keyword id="KW-0689">Ribosomal protein</keyword>
<proteinExistence type="inferred from homology"/>
<evidence type="ECO:0000255" key="1">
    <source>
        <dbReference type="HAMAP-Rule" id="MF_00539"/>
    </source>
</evidence>
<evidence type="ECO:0000256" key="2">
    <source>
        <dbReference type="SAM" id="MobiDB-lite"/>
    </source>
</evidence>
<evidence type="ECO:0000305" key="3"/>
<comment type="similarity">
    <text evidence="1">Belongs to the bacterial ribosomal protein bL27 family.</text>
</comment>
<accession>A4Y426</accession>
<gene>
    <name evidence="1" type="primary">rpmA</name>
    <name type="ordered locus">Sputcn32_0980</name>
</gene>
<name>RL27_SHEPC</name>